<evidence type="ECO:0000250" key="1"/>
<evidence type="ECO:0000255" key="2">
    <source>
        <dbReference type="HAMAP-Rule" id="MF_00403"/>
    </source>
</evidence>
<evidence type="ECO:0000305" key="3"/>
<sequence>MPTIKQLIRNPRQPIRNVTKSPALRGCPQRRGTCTRVYTITPKKPNSALRKVARVRLTSGFEITAYIPGIGHNSQEHSVVLVRGGRVKDLPGVRYHIVRGTLDAVGVKDRQQGRSKYGVKKPK</sequence>
<organism>
    <name type="scientific">Citrus sinensis</name>
    <name type="common">Sweet orange</name>
    <name type="synonym">Citrus aurantium var. sinensis</name>
    <dbReference type="NCBI Taxonomy" id="2711"/>
    <lineage>
        <taxon>Eukaryota</taxon>
        <taxon>Viridiplantae</taxon>
        <taxon>Streptophyta</taxon>
        <taxon>Embryophyta</taxon>
        <taxon>Tracheophyta</taxon>
        <taxon>Spermatophyta</taxon>
        <taxon>Magnoliopsida</taxon>
        <taxon>eudicotyledons</taxon>
        <taxon>Gunneridae</taxon>
        <taxon>Pentapetalae</taxon>
        <taxon>rosids</taxon>
        <taxon>malvids</taxon>
        <taxon>Sapindales</taxon>
        <taxon>Rutaceae</taxon>
        <taxon>Aurantioideae</taxon>
        <taxon>Citrus</taxon>
    </lineage>
</organism>
<proteinExistence type="inferred from homology"/>
<keyword id="KW-0150">Chloroplast</keyword>
<keyword id="KW-0934">Plastid</keyword>
<keyword id="KW-0687">Ribonucleoprotein</keyword>
<keyword id="KW-0689">Ribosomal protein</keyword>
<keyword id="KW-0694">RNA-binding</keyword>
<keyword id="KW-0699">rRNA-binding</keyword>
<feature type="chain" id="PRO_0000276606" description="Small ribosomal subunit protein uS12cz/uS12cy">
    <location>
        <begin position="1"/>
        <end position="123"/>
    </location>
</feature>
<comment type="function">
    <text evidence="1">With S4 and S5 plays an important role in translational accuracy. Located at the interface of the 30S and 50S subunits (By similarity).</text>
</comment>
<comment type="subunit">
    <text evidence="1">Part of the 30S ribosomal subunit.</text>
</comment>
<comment type="subcellular location">
    <subcellularLocation>
        <location>Plastid</location>
        <location>Chloroplast</location>
    </subcellularLocation>
</comment>
<comment type="similarity">
    <text evidence="3">Belongs to the universal ribosomal protein uS12 family.</text>
</comment>
<accession>Q09MF3</accession>
<protein>
    <recommendedName>
        <fullName evidence="2">Small ribosomal subunit protein uS12cz/uS12cy</fullName>
    </recommendedName>
    <alternativeName>
        <fullName evidence="3">30S ribosomal protein S12, chloroplastic</fullName>
    </alternativeName>
</protein>
<geneLocation type="chloroplast"/>
<gene>
    <name type="primary">rps12-A</name>
</gene>
<gene>
    <name type="primary">rps12-B</name>
</gene>
<name>RR12_CITSI</name>
<reference key="1">
    <citation type="journal article" date="2006" name="BMC Plant Biol.">
        <title>The complete chloroplast genome sequence of Citrus sinensis (L.) Osbeck var 'Ridge Pineapple': organization and phylogenetic relationships to other angiosperms.</title>
        <authorList>
            <person name="Bausher M.G."/>
            <person name="Singh N.D."/>
            <person name="Lee S.-B."/>
            <person name="Jansen R.K."/>
            <person name="Daniell H."/>
        </authorList>
    </citation>
    <scope>NUCLEOTIDE SEQUENCE [LARGE SCALE GENOMIC DNA]</scope>
    <source>
        <strain>cv. Osbeck var. Ridge Pineapple</strain>
    </source>
</reference>
<dbReference type="EMBL" id="DQ864733">
    <property type="protein sequence ID" value="ABI49066.1"/>
    <property type="molecule type" value="Genomic_DNA"/>
</dbReference>
<dbReference type="EMBL" id="DQ864733">
    <property type="protein sequence ID" value="ABI49080.1"/>
    <property type="molecule type" value="Genomic_DNA"/>
</dbReference>
<dbReference type="SMR" id="Q09MF3"/>
<dbReference type="KEGG" id="cit:4271160"/>
<dbReference type="KEGG" id="cit:4271172"/>
<dbReference type="OrthoDB" id="904216at71240"/>
<dbReference type="GO" id="GO:0009507">
    <property type="term" value="C:chloroplast"/>
    <property type="evidence" value="ECO:0007669"/>
    <property type="project" value="UniProtKB-SubCell"/>
</dbReference>
<dbReference type="GO" id="GO:0015935">
    <property type="term" value="C:small ribosomal subunit"/>
    <property type="evidence" value="ECO:0007669"/>
    <property type="project" value="InterPro"/>
</dbReference>
<dbReference type="GO" id="GO:0019843">
    <property type="term" value="F:rRNA binding"/>
    <property type="evidence" value="ECO:0007669"/>
    <property type="project" value="UniProtKB-UniRule"/>
</dbReference>
<dbReference type="GO" id="GO:0003735">
    <property type="term" value="F:structural constituent of ribosome"/>
    <property type="evidence" value="ECO:0007669"/>
    <property type="project" value="InterPro"/>
</dbReference>
<dbReference type="GO" id="GO:0006412">
    <property type="term" value="P:translation"/>
    <property type="evidence" value="ECO:0007669"/>
    <property type="project" value="UniProtKB-UniRule"/>
</dbReference>
<dbReference type="CDD" id="cd03368">
    <property type="entry name" value="Ribosomal_S12"/>
    <property type="match status" value="1"/>
</dbReference>
<dbReference type="FunFam" id="2.40.50.140:FF:000008">
    <property type="entry name" value="30S ribosomal protein S12, chloroplastic"/>
    <property type="match status" value="1"/>
</dbReference>
<dbReference type="Gene3D" id="2.40.50.140">
    <property type="entry name" value="Nucleic acid-binding proteins"/>
    <property type="match status" value="1"/>
</dbReference>
<dbReference type="HAMAP" id="MF_00403_B">
    <property type="entry name" value="Ribosomal_uS12_B"/>
    <property type="match status" value="1"/>
</dbReference>
<dbReference type="InterPro" id="IPR012340">
    <property type="entry name" value="NA-bd_OB-fold"/>
</dbReference>
<dbReference type="InterPro" id="IPR006032">
    <property type="entry name" value="Ribosomal_uS12"/>
</dbReference>
<dbReference type="InterPro" id="IPR005679">
    <property type="entry name" value="Ribosomal_uS12_bac"/>
</dbReference>
<dbReference type="NCBIfam" id="TIGR00981">
    <property type="entry name" value="rpsL_bact"/>
    <property type="match status" value="1"/>
</dbReference>
<dbReference type="PANTHER" id="PTHR11652">
    <property type="entry name" value="30S RIBOSOMAL PROTEIN S12 FAMILY MEMBER"/>
    <property type="match status" value="1"/>
</dbReference>
<dbReference type="Pfam" id="PF00164">
    <property type="entry name" value="Ribosom_S12_S23"/>
    <property type="match status" value="1"/>
</dbReference>
<dbReference type="PIRSF" id="PIRSF002133">
    <property type="entry name" value="Ribosomal_S12/S23"/>
    <property type="match status" value="1"/>
</dbReference>
<dbReference type="PRINTS" id="PR01034">
    <property type="entry name" value="RIBOSOMALS12"/>
</dbReference>
<dbReference type="SUPFAM" id="SSF50249">
    <property type="entry name" value="Nucleic acid-binding proteins"/>
    <property type="match status" value="1"/>
</dbReference>
<dbReference type="PROSITE" id="PS00055">
    <property type="entry name" value="RIBOSOMAL_S12"/>
    <property type="match status" value="1"/>
</dbReference>